<gene>
    <name type="primary">Nap1l4</name>
</gene>
<organism>
    <name type="scientific">Mus musculus</name>
    <name type="common">Mouse</name>
    <dbReference type="NCBI Taxonomy" id="10090"/>
    <lineage>
        <taxon>Eukaryota</taxon>
        <taxon>Metazoa</taxon>
        <taxon>Chordata</taxon>
        <taxon>Craniata</taxon>
        <taxon>Vertebrata</taxon>
        <taxon>Euteleostomi</taxon>
        <taxon>Mammalia</taxon>
        <taxon>Eutheria</taxon>
        <taxon>Euarchontoglires</taxon>
        <taxon>Glires</taxon>
        <taxon>Rodentia</taxon>
        <taxon>Myomorpha</taxon>
        <taxon>Muroidea</taxon>
        <taxon>Muridae</taxon>
        <taxon>Murinae</taxon>
        <taxon>Mus</taxon>
        <taxon>Mus</taxon>
    </lineage>
</organism>
<name>NP1L4_MOUSE</name>
<feature type="initiator methionine" description="Removed" evidence="2">
    <location>
        <position position="1"/>
    </location>
</feature>
<feature type="chain" id="PRO_0000236213" description="Nucleosome assembly protein 1-like 4">
    <location>
        <begin position="2"/>
        <end position="375"/>
    </location>
</feature>
<feature type="region of interest" description="Disordered" evidence="4">
    <location>
        <begin position="1"/>
        <end position="28"/>
    </location>
</feature>
<feature type="region of interest" description="Disordered" evidence="4">
    <location>
        <begin position="339"/>
        <end position="375"/>
    </location>
</feature>
<feature type="short sequence motif" description="Nuclear localization signal" evidence="3">
    <location>
        <begin position="265"/>
        <end position="271"/>
    </location>
</feature>
<feature type="modified residue" description="N-acetylalanine" evidence="2">
    <location>
        <position position="2"/>
    </location>
</feature>
<feature type="modified residue" description="Phosphoserine" evidence="2">
    <location>
        <position position="5"/>
    </location>
</feature>
<feature type="modified residue" description="Phosphoserine" evidence="2">
    <location>
        <position position="7"/>
    </location>
</feature>
<feature type="modified residue" description="Phosphoserine" evidence="8 10">
    <location>
        <position position="49"/>
    </location>
</feature>
<feature type="modified residue" description="Phosphothreonine" evidence="10">
    <location>
        <position position="51"/>
    </location>
</feature>
<feature type="modified residue" description="Phosphoserine" evidence="10">
    <location>
        <position position="53"/>
    </location>
</feature>
<feature type="modified residue" description="Phosphoserine" evidence="10">
    <location>
        <position position="54"/>
    </location>
</feature>
<feature type="modified residue" description="Phosphothreonine" evidence="2">
    <location>
        <position position="58"/>
    </location>
</feature>
<feature type="modified residue" description="N6-acetyllysine" evidence="1">
    <location>
        <position position="105"/>
    </location>
</feature>
<feature type="modified residue" description="Phosphoserine" evidence="9 10">
    <location>
        <position position="125"/>
    </location>
</feature>
<feature type="modified residue" description="N6-acetyllysine" evidence="11">
    <location>
        <position position="146"/>
    </location>
</feature>
<feature type="modified residue" description="Phosphoserine" evidence="10">
    <location>
        <position position="304"/>
    </location>
</feature>
<keyword id="KW-0007">Acetylation</keyword>
<keyword id="KW-0143">Chaperone</keyword>
<keyword id="KW-0963">Cytoplasm</keyword>
<keyword id="KW-0539">Nucleus</keyword>
<keyword id="KW-0597">Phosphoprotein</keyword>
<keyword id="KW-1185">Reference proteome</keyword>
<reference key="1">
    <citation type="journal article" date="1998" name="Hum. Mol. Genet.">
        <title>Syntenic organization of the mouse distal chromosome 7 imprinting cluster and the Beckwith-Wiedemann syndrome region in chromosome 11p15.5.</title>
        <authorList>
            <person name="Paulsen M."/>
            <person name="Davies K.R."/>
            <person name="Bowden L.M."/>
            <person name="Villar A.J."/>
            <person name="Franck O."/>
            <person name="Fuermann M."/>
            <person name="Dean W.L."/>
            <person name="Moore T.F."/>
            <person name="Rodrigues N."/>
            <person name="Davies K.E."/>
            <person name="Hu R.-J."/>
            <person name="Feinberg A.P."/>
            <person name="Maher E.R."/>
            <person name="Reik W."/>
            <person name="Walter J."/>
        </authorList>
    </citation>
    <scope>NUCLEOTIDE SEQUENCE [MRNA]</scope>
    <source>
        <strain>C57BL/6J</strain>
    </source>
</reference>
<reference key="2">
    <citation type="journal article" date="2000" name="Hum. Mol. Genet.">
        <title>Sequence and functional comparison in the Beckwith-Wiedemann region: implications for a novel imprinting centre and extended imprinting.</title>
        <authorList>
            <person name="Engemann S."/>
            <person name="Stroedicke M."/>
            <person name="Paulsen M."/>
            <person name="Franck O."/>
            <person name="Reinhardt R."/>
            <person name="Lane N."/>
            <person name="Reik W."/>
            <person name="Walter J."/>
        </authorList>
    </citation>
    <scope>NUCLEOTIDE SEQUENCE [GENOMIC DNA]</scope>
    <source>
        <strain>129/Sv</strain>
    </source>
</reference>
<reference key="3">
    <citation type="journal article" date="2007" name="Mol. Cell">
        <title>A targeted multienzyme mechanism for selective microtubule polyglutamylation.</title>
        <authorList>
            <person name="van Dijk J."/>
            <person name="Rogowski K."/>
            <person name="Miro J."/>
            <person name="Lacroix B."/>
            <person name="Edde B."/>
            <person name="Janke C."/>
        </authorList>
    </citation>
    <scope>GLUTAMYLATION</scope>
    <source>
        <strain>C57BL/6J</strain>
        <tissue>Testis</tissue>
    </source>
</reference>
<reference key="4">
    <citation type="journal article" date="2007" name="Proc. Natl. Acad. Sci. U.S.A.">
        <title>Large-scale phosphorylation analysis of mouse liver.</title>
        <authorList>
            <person name="Villen J."/>
            <person name="Beausoleil S.A."/>
            <person name="Gerber S.A."/>
            <person name="Gygi S.P."/>
        </authorList>
    </citation>
    <scope>PHOSPHORYLATION [LARGE SCALE ANALYSIS] AT SER-49</scope>
    <scope>IDENTIFICATION BY MASS SPECTROMETRY [LARGE SCALE ANALYSIS]</scope>
    <source>
        <tissue>Liver</tissue>
    </source>
</reference>
<reference key="5">
    <citation type="journal article" date="2009" name="Mol. Cell. Proteomics">
        <title>Large scale localization of protein phosphorylation by use of electron capture dissociation mass spectrometry.</title>
        <authorList>
            <person name="Sweet S.M."/>
            <person name="Bailey C.M."/>
            <person name="Cunningham D.L."/>
            <person name="Heath J.K."/>
            <person name="Cooper H.J."/>
        </authorList>
    </citation>
    <scope>PHOSPHORYLATION [LARGE SCALE ANALYSIS] AT SER-125</scope>
    <scope>IDENTIFICATION BY MASS SPECTROMETRY [LARGE SCALE ANALYSIS]</scope>
    <source>
        <tissue>Embryonic fibroblast</tissue>
    </source>
</reference>
<reference key="6">
    <citation type="journal article" date="2010" name="Cell">
        <title>A tissue-specific atlas of mouse protein phosphorylation and expression.</title>
        <authorList>
            <person name="Huttlin E.L."/>
            <person name="Jedrychowski M.P."/>
            <person name="Elias J.E."/>
            <person name="Goswami T."/>
            <person name="Rad R."/>
            <person name="Beausoleil S.A."/>
            <person name="Villen J."/>
            <person name="Haas W."/>
            <person name="Sowa M.E."/>
            <person name="Gygi S.P."/>
        </authorList>
    </citation>
    <scope>PHOSPHORYLATION [LARGE SCALE ANALYSIS] AT SER-49; THR-51; SER-53; SER-54; SER-125 AND SER-304</scope>
    <scope>IDENTIFICATION BY MASS SPECTROMETRY [LARGE SCALE ANALYSIS]</scope>
    <source>
        <tissue>Brain</tissue>
        <tissue>Brown adipose tissue</tissue>
        <tissue>Heart</tissue>
        <tissue>Kidney</tissue>
        <tissue>Liver</tissue>
        <tissue>Lung</tissue>
        <tissue>Pancreas</tissue>
        <tissue>Spleen</tissue>
        <tissue>Testis</tissue>
    </source>
</reference>
<reference key="7">
    <citation type="journal article" date="2013" name="Mol. Cell">
        <title>SIRT5-mediated lysine desuccinylation impacts diverse metabolic pathways.</title>
        <authorList>
            <person name="Park J."/>
            <person name="Chen Y."/>
            <person name="Tishkoff D.X."/>
            <person name="Peng C."/>
            <person name="Tan M."/>
            <person name="Dai L."/>
            <person name="Xie Z."/>
            <person name="Zhang Y."/>
            <person name="Zwaans B.M."/>
            <person name="Skinner M.E."/>
            <person name="Lombard D.B."/>
            <person name="Zhao Y."/>
        </authorList>
    </citation>
    <scope>ACETYLATION [LARGE SCALE ANALYSIS] AT LYS-146</scope>
    <scope>IDENTIFICATION BY MASS SPECTROMETRY [LARGE SCALE ANALYSIS]</scope>
    <source>
        <tissue>Embryonic fibroblast</tissue>
    </source>
</reference>
<reference key="8">
    <citation type="journal article" date="2017" name="Mol. Cell">
        <title>Histone variant H2A.L.2 guides transition protein-dependent protamine assembly in male germ cells.</title>
        <authorList>
            <person name="Barral S."/>
            <person name="Morozumi Y."/>
            <person name="Tanaka H."/>
            <person name="Montellier E."/>
            <person name="Govin J."/>
            <person name="de Dieuleveult M."/>
            <person name="Charbonnier G."/>
            <person name="Coute Y."/>
            <person name="Puthier D."/>
            <person name="Buchou T."/>
            <person name="Boussouar F."/>
            <person name="Urahama T."/>
            <person name="Fenaille F."/>
            <person name="Curtet S."/>
            <person name="Hery P."/>
            <person name="Fernandez-Nunez N."/>
            <person name="Shiota H."/>
            <person name="Gerard M."/>
            <person name="Rousseaux S."/>
            <person name="Kurumizaka H."/>
            <person name="Khochbin S."/>
        </authorList>
    </citation>
    <scope>FUNCTION</scope>
</reference>
<sequence length="375" mass="42679">MAENSLSDGGPADSVEAAKNASNTEKLTDQVMQNPQVLAALQERLDNVSHTPSSYIETLPKAVKRRINALKQLQVRCAHIEAKFYEEVHDLERKYAALYQPLFDKRREFITGDVEPTDAESAWHSENEEEDKLAGDMKNKVVIAEKEAATVEELNPKGIPEFWFTIFRNVDMLSELVQEYDEPILKHLQDIKVKFSDPGQPMSFVLEFHFEPNDYFTNPVLTKTYKMKSEPDKADPFSFEGPEIVDCDGCTIDWKKGKNVTVKTIKKKQKHKGRGTVRTITKQVPNESFFNFFSPLKASGDGESLDEDSEFTLASDFEIGHFFRERIVPRAVLYFTGEAIEDDDNFEEGEEGEEEELEGDEEGEDEDDADVNPKV</sequence>
<comment type="function">
    <text evidence="6">Acts as a histone chaperone in nucleosome assembly (PubMed:28366643). In condensing spermatids, mediates the loading of the heterodimer composed of histones H2AB1 and H2BC1/TH2B onto the nucleosomes, thereby promoting the replacement of histones to protamine in male germ cells (PubMed:28366643).</text>
</comment>
<comment type="subunit">
    <text evidence="2">Interacts with core (H2A, H2B, H3, H4) and linker (H1) histones.</text>
</comment>
<comment type="subcellular location">
    <subcellularLocation>
        <location evidence="2">Nucleus</location>
    </subcellularLocation>
    <subcellularLocation>
        <location evidence="2">Cytoplasm</location>
    </subcellularLocation>
    <text evidence="2">Present in the cytoplasm and excluded from the nucleus during G0/G1 phase, then relocates to the nucleus by the time cells are in S phase. Phosphorylated form localizes in the cytoplasm during the G0/G1 transition, whereas dephosphorylation leads to relocalization into the nucleus at the G1/S-boundary.</text>
</comment>
<comment type="PTM">
    <text evidence="5">Polyglutamylated and polyglycylated. These 2 modifications occur exclusively on glutamate residues and result in either polyglutamate or polyglycine chains on the gamma-carboxyl group. Both modifications can coexist on the same protein on adjacent residues, and lowering polyglycylation levels increases polyglutamylation, and reciprocally. Polyglutamylated by TTLL4.</text>
</comment>
<comment type="PTM">
    <text evidence="2">Phosphorylated at the G0/G1 boundary but it is not phosphorylated in S-phase. Phosphorylated protein remains in the cytoplasm in a complex with histones during the G0/G1 transition, whereas dephosphorylation triggers its transport into the nucleus at the G1/S-boundary.</text>
</comment>
<comment type="similarity">
    <text evidence="7">Belongs to the nucleosome assembly protein (NAP) family.</text>
</comment>
<proteinExistence type="evidence at protein level"/>
<dbReference type="EMBL" id="AJ002198">
    <property type="protein sequence ID" value="CAA05245.1"/>
    <property type="molecule type" value="mRNA"/>
</dbReference>
<dbReference type="EMBL" id="AJ276505">
    <property type="protein sequence ID" value="CAC16399.1"/>
    <property type="molecule type" value="Genomic_DNA"/>
</dbReference>
<dbReference type="CCDS" id="CCDS40197.1"/>
<dbReference type="RefSeq" id="NP_001272418.1">
    <property type="nucleotide sequence ID" value="NM_001285489.1"/>
</dbReference>
<dbReference type="RefSeq" id="NP_001272419.1">
    <property type="nucleotide sequence ID" value="NM_001285490.1"/>
</dbReference>
<dbReference type="RefSeq" id="NP_032698.1">
    <property type="nucleotide sequence ID" value="NM_008672.3"/>
</dbReference>
<dbReference type="RefSeq" id="XP_030098060.1">
    <property type="nucleotide sequence ID" value="XM_030242200.2"/>
</dbReference>
<dbReference type="RefSeq" id="XP_030098062.1">
    <property type="nucleotide sequence ID" value="XM_030242202.1"/>
</dbReference>
<dbReference type="RefSeq" id="XP_036008656.1">
    <property type="nucleotide sequence ID" value="XM_036152763.1"/>
</dbReference>
<dbReference type="SMR" id="Q78ZA7"/>
<dbReference type="BioGRID" id="201692">
    <property type="interactions" value="8"/>
</dbReference>
<dbReference type="FunCoup" id="Q78ZA7">
    <property type="interactions" value="3079"/>
</dbReference>
<dbReference type="IntAct" id="Q78ZA7">
    <property type="interactions" value="3"/>
</dbReference>
<dbReference type="STRING" id="10090.ENSMUSP00000146474"/>
<dbReference type="GlyGen" id="Q78ZA7">
    <property type="glycosylation" value="2 sites, 1 O-linked glycan (1 site)"/>
</dbReference>
<dbReference type="iPTMnet" id="Q78ZA7"/>
<dbReference type="PhosphoSitePlus" id="Q78ZA7"/>
<dbReference type="SwissPalm" id="Q78ZA7"/>
<dbReference type="CPTAC" id="non-CPTAC-3850"/>
<dbReference type="jPOST" id="Q78ZA7"/>
<dbReference type="PaxDb" id="10090-ENSMUSP00000072510"/>
<dbReference type="ProteomicsDB" id="293681"/>
<dbReference type="Pumba" id="Q78ZA7"/>
<dbReference type="Antibodypedia" id="23223">
    <property type="antibodies" value="73 antibodies from 21 providers"/>
</dbReference>
<dbReference type="DNASU" id="17955"/>
<dbReference type="Ensembl" id="ENSMUST00000072727.7">
    <property type="protein sequence ID" value="ENSMUSP00000072510.6"/>
    <property type="gene ID" value="ENSMUSG00000059119.10"/>
</dbReference>
<dbReference type="GeneID" id="17955"/>
<dbReference type="KEGG" id="mmu:17955"/>
<dbReference type="UCSC" id="uc009kpl.2">
    <property type="organism name" value="mouse"/>
</dbReference>
<dbReference type="AGR" id="MGI:1316687"/>
<dbReference type="CTD" id="4676"/>
<dbReference type="MGI" id="MGI:1316687">
    <property type="gene designation" value="Nap1l4"/>
</dbReference>
<dbReference type="VEuPathDB" id="HostDB:ENSMUSG00000059119"/>
<dbReference type="eggNOG" id="KOG1507">
    <property type="taxonomic scope" value="Eukaryota"/>
</dbReference>
<dbReference type="GeneTree" id="ENSGT00940000153362"/>
<dbReference type="HOGENOM" id="CLU_038841_3_0_1"/>
<dbReference type="InParanoid" id="Q78ZA7"/>
<dbReference type="OMA" id="YSGDFMY"/>
<dbReference type="OrthoDB" id="27325at2759"/>
<dbReference type="PhylomeDB" id="Q78ZA7"/>
<dbReference type="TreeFam" id="TF314349"/>
<dbReference type="BioGRID-ORCS" id="17955">
    <property type="hits" value="4 hits in 80 CRISPR screens"/>
</dbReference>
<dbReference type="ChiTaRS" id="Nap1l4">
    <property type="organism name" value="mouse"/>
</dbReference>
<dbReference type="PRO" id="PR:Q78ZA7"/>
<dbReference type="Proteomes" id="UP000000589">
    <property type="component" value="Chromosome 7"/>
</dbReference>
<dbReference type="RNAct" id="Q78ZA7">
    <property type="molecule type" value="protein"/>
</dbReference>
<dbReference type="Bgee" id="ENSMUSG00000059119">
    <property type="expression patterns" value="Expressed in saccule of membranous labyrinth and 261 other cell types or tissues"/>
</dbReference>
<dbReference type="ExpressionAtlas" id="Q78ZA7">
    <property type="expression patterns" value="baseline and differential"/>
</dbReference>
<dbReference type="GO" id="GO:0005737">
    <property type="term" value="C:cytoplasm"/>
    <property type="evidence" value="ECO:0000250"/>
    <property type="project" value="UniProtKB"/>
</dbReference>
<dbReference type="GO" id="GO:0005634">
    <property type="term" value="C:nucleus"/>
    <property type="evidence" value="ECO:0000250"/>
    <property type="project" value="UniProtKB"/>
</dbReference>
<dbReference type="GO" id="GO:0031491">
    <property type="term" value="F:nucleosome binding"/>
    <property type="evidence" value="ECO:0000250"/>
    <property type="project" value="UniProtKB"/>
</dbReference>
<dbReference type="GO" id="GO:0006334">
    <property type="term" value="P:nucleosome assembly"/>
    <property type="evidence" value="ECO:0000314"/>
    <property type="project" value="UniProtKB"/>
</dbReference>
<dbReference type="FunFam" id="1.20.5.1500:FF:000001">
    <property type="entry name" value="Nucleosome assembly protein 1-like 1"/>
    <property type="match status" value="1"/>
</dbReference>
<dbReference type="FunFam" id="3.30.1120.90:FF:000001">
    <property type="entry name" value="Nucleosome assembly protein 1-like 1"/>
    <property type="match status" value="1"/>
</dbReference>
<dbReference type="Gene3D" id="1.20.5.1500">
    <property type="match status" value="1"/>
</dbReference>
<dbReference type="Gene3D" id="3.30.1120.90">
    <property type="entry name" value="Nucleosome assembly protein"/>
    <property type="match status" value="1"/>
</dbReference>
<dbReference type="InterPro" id="IPR037231">
    <property type="entry name" value="NAP-like_sf"/>
</dbReference>
<dbReference type="InterPro" id="IPR002164">
    <property type="entry name" value="NAP_family"/>
</dbReference>
<dbReference type="PANTHER" id="PTHR11875">
    <property type="entry name" value="TESTIS-SPECIFIC Y-ENCODED PROTEIN"/>
    <property type="match status" value="1"/>
</dbReference>
<dbReference type="Pfam" id="PF00956">
    <property type="entry name" value="NAP"/>
    <property type="match status" value="1"/>
</dbReference>
<dbReference type="SUPFAM" id="SSF143113">
    <property type="entry name" value="NAP-like"/>
    <property type="match status" value="1"/>
</dbReference>
<accession>Q78ZA7</accession>
<accession>O88701</accession>
<evidence type="ECO:0000250" key="1">
    <source>
        <dbReference type="UniProtKB" id="P28656"/>
    </source>
</evidence>
<evidence type="ECO:0000250" key="2">
    <source>
        <dbReference type="UniProtKB" id="Q99733"/>
    </source>
</evidence>
<evidence type="ECO:0000255" key="3"/>
<evidence type="ECO:0000256" key="4">
    <source>
        <dbReference type="SAM" id="MobiDB-lite"/>
    </source>
</evidence>
<evidence type="ECO:0000269" key="5">
    <source>
    </source>
</evidence>
<evidence type="ECO:0000269" key="6">
    <source>
    </source>
</evidence>
<evidence type="ECO:0000305" key="7"/>
<evidence type="ECO:0007744" key="8">
    <source>
    </source>
</evidence>
<evidence type="ECO:0007744" key="9">
    <source>
    </source>
</evidence>
<evidence type="ECO:0007744" key="10">
    <source>
    </source>
</evidence>
<evidence type="ECO:0007744" key="11">
    <source>
    </source>
</evidence>
<protein>
    <recommendedName>
        <fullName>Nucleosome assembly protein 1-like 4</fullName>
    </recommendedName>
</protein>